<protein>
    <recommendedName>
        <fullName>Neuronal acetylcholine receptor subunit alpha-4</fullName>
    </recommendedName>
</protein>
<feature type="signal peptide" evidence="6">
    <location>
        <begin position="1"/>
        <end position="31"/>
    </location>
</feature>
<feature type="chain" id="PRO_0000310947" description="Neuronal acetylcholine receptor subunit alpha-4">
    <location>
        <begin position="32"/>
        <end position="627"/>
    </location>
</feature>
<feature type="topological domain" description="Extracellular" evidence="6">
    <location>
        <begin position="32"/>
        <end position="244"/>
    </location>
</feature>
<feature type="transmembrane region" description="Helical" evidence="6">
    <location>
        <begin position="245"/>
        <end position="269"/>
    </location>
</feature>
<feature type="transmembrane region" description="Helical" evidence="6">
    <location>
        <begin position="277"/>
        <end position="295"/>
    </location>
</feature>
<feature type="transmembrane region" description="Helical" evidence="6">
    <location>
        <begin position="311"/>
        <end position="332"/>
    </location>
</feature>
<feature type="topological domain" description="Cytoplasmic" evidence="6">
    <location>
        <begin position="333"/>
        <end position="600"/>
    </location>
</feature>
<feature type="transmembrane region" description="Helical" evidence="6">
    <location>
        <begin position="601"/>
        <end position="619"/>
    </location>
</feature>
<feature type="region of interest" description="Disordered" evidence="7">
    <location>
        <begin position="384"/>
        <end position="463"/>
    </location>
</feature>
<feature type="compositionally biased region" description="Low complexity" evidence="7">
    <location>
        <begin position="384"/>
        <end position="399"/>
    </location>
</feature>
<feature type="compositionally biased region" description="Pro residues" evidence="7">
    <location>
        <begin position="444"/>
        <end position="458"/>
    </location>
</feature>
<feature type="binding site" evidence="5">
    <location>
        <position position="78"/>
    </location>
    <ligand>
        <name>Ca(2+)</name>
        <dbReference type="ChEBI" id="CHEBI:29108"/>
    </ligand>
</feature>
<feature type="binding site" evidence="5">
    <location>
        <position position="80"/>
    </location>
    <ligand>
        <name>Ca(2+)</name>
        <dbReference type="ChEBI" id="CHEBI:29108"/>
    </ligand>
</feature>
<feature type="modified residue" description="Phosphoserine" evidence="4">
    <location>
        <position position="427"/>
    </location>
</feature>
<feature type="modified residue" description="Phosphoserine" evidence="1">
    <location>
        <position position="541"/>
    </location>
</feature>
<feature type="lipid moiety-binding region" description="S-palmitoyl cysteine" evidence="3">
    <location>
        <position position="273"/>
    </location>
</feature>
<feature type="glycosylation site" description="N-linked (GlcNAc...) asparagine" evidence="6">
    <location>
        <position position="59"/>
    </location>
</feature>
<feature type="glycosylation site" description="N-linked (GlcNAc...) asparagine" evidence="6">
    <location>
        <position position="109"/>
    </location>
</feature>
<feature type="glycosylation site" description="N-linked (GlcNAc...) asparagine" evidence="6">
    <location>
        <position position="176"/>
    </location>
</feature>
<feature type="disulfide bond" evidence="5">
    <location>
        <begin position="163"/>
        <end position="177"/>
    </location>
</feature>
<feature type="disulfide bond" description="Associated with receptor activation" evidence="5">
    <location>
        <begin position="227"/>
        <end position="228"/>
    </location>
</feature>
<keyword id="KW-0106">Calcium</keyword>
<keyword id="KW-1003">Cell membrane</keyword>
<keyword id="KW-1015">Disulfide bond</keyword>
<keyword id="KW-0325">Glycoprotein</keyword>
<keyword id="KW-0407">Ion channel</keyword>
<keyword id="KW-0406">Ion transport</keyword>
<keyword id="KW-1071">Ligand-gated ion channel</keyword>
<keyword id="KW-0449">Lipoprotein</keyword>
<keyword id="KW-0472">Membrane</keyword>
<keyword id="KW-0479">Metal-binding</keyword>
<keyword id="KW-0564">Palmitate</keyword>
<keyword id="KW-0597">Phosphoprotein</keyword>
<keyword id="KW-0675">Receptor</keyword>
<keyword id="KW-1185">Reference proteome</keyword>
<keyword id="KW-0732">Signal</keyword>
<keyword id="KW-0770">Synapse</keyword>
<keyword id="KW-0812">Transmembrane</keyword>
<keyword id="KW-1133">Transmembrane helix</keyword>
<keyword id="KW-0813">Transport</keyword>
<gene>
    <name type="primary">CHRNA4</name>
</gene>
<dbReference type="EMBL" id="DQ533688">
    <property type="protein sequence ID" value="ABF83200.1"/>
    <property type="molecule type" value="mRNA"/>
</dbReference>
<dbReference type="RefSeq" id="NP_001297126.1">
    <property type="nucleotide sequence ID" value="NM_001310197.1"/>
</dbReference>
<dbReference type="SMR" id="Q19AE6"/>
<dbReference type="STRING" id="9669.ENSMPUP00000008135"/>
<dbReference type="GlyCosmos" id="Q19AE6">
    <property type="glycosylation" value="3 sites, No reported glycans"/>
</dbReference>
<dbReference type="GeneID" id="101690282"/>
<dbReference type="CTD" id="1137"/>
<dbReference type="eggNOG" id="KOG3645">
    <property type="taxonomic scope" value="Eukaryota"/>
</dbReference>
<dbReference type="HOGENOM" id="CLU_018074_1_1_1"/>
<dbReference type="InParanoid" id="Q19AE6"/>
<dbReference type="OrthoDB" id="5975154at2759"/>
<dbReference type="Proteomes" id="UP000000715">
    <property type="component" value="Unplaced"/>
</dbReference>
<dbReference type="GO" id="GO:0005892">
    <property type="term" value="C:acetylcholine-gated channel complex"/>
    <property type="evidence" value="ECO:0000250"/>
    <property type="project" value="UniProtKB"/>
</dbReference>
<dbReference type="GO" id="GO:0045211">
    <property type="term" value="C:postsynaptic membrane"/>
    <property type="evidence" value="ECO:0007669"/>
    <property type="project" value="UniProtKB-KW"/>
</dbReference>
<dbReference type="GO" id="GO:0042734">
    <property type="term" value="C:presynaptic membrane"/>
    <property type="evidence" value="ECO:0000250"/>
    <property type="project" value="UniProtKB"/>
</dbReference>
<dbReference type="GO" id="GO:0015464">
    <property type="term" value="F:acetylcholine receptor activity"/>
    <property type="evidence" value="ECO:0000250"/>
    <property type="project" value="UniProtKB"/>
</dbReference>
<dbReference type="GO" id="GO:0022848">
    <property type="term" value="F:acetylcholine-gated monoatomic cation-selective channel activity"/>
    <property type="evidence" value="ECO:0000250"/>
    <property type="project" value="UniProtKB"/>
</dbReference>
<dbReference type="GO" id="GO:0095500">
    <property type="term" value="P:acetylcholine receptor signaling pathway"/>
    <property type="evidence" value="ECO:0000250"/>
    <property type="project" value="UniProtKB"/>
</dbReference>
<dbReference type="GO" id="GO:0035095">
    <property type="term" value="P:behavioral response to nicotine"/>
    <property type="evidence" value="ECO:0000250"/>
    <property type="project" value="UniProtKB"/>
</dbReference>
<dbReference type="GO" id="GO:0050890">
    <property type="term" value="P:cognition"/>
    <property type="evidence" value="ECO:0000250"/>
    <property type="project" value="UniProtKB"/>
</dbReference>
<dbReference type="GO" id="GO:0006281">
    <property type="term" value="P:DNA repair"/>
    <property type="evidence" value="ECO:0000250"/>
    <property type="project" value="UniProtKB"/>
</dbReference>
<dbReference type="GO" id="GO:0050877">
    <property type="term" value="P:nervous system process"/>
    <property type="evidence" value="ECO:0000250"/>
    <property type="project" value="UniProtKB"/>
</dbReference>
<dbReference type="GO" id="GO:0001666">
    <property type="term" value="P:response to hypoxia"/>
    <property type="evidence" value="ECO:0000250"/>
    <property type="project" value="UniProtKB"/>
</dbReference>
<dbReference type="GO" id="GO:0006979">
    <property type="term" value="P:response to oxidative stress"/>
    <property type="evidence" value="ECO:0000250"/>
    <property type="project" value="UniProtKB"/>
</dbReference>
<dbReference type="GO" id="GO:0007165">
    <property type="term" value="P:signal transduction"/>
    <property type="evidence" value="ECO:0000250"/>
    <property type="project" value="UniProtKB"/>
</dbReference>
<dbReference type="GO" id="GO:0007271">
    <property type="term" value="P:synaptic transmission, cholinergic"/>
    <property type="evidence" value="ECO:0000250"/>
    <property type="project" value="UniProtKB"/>
</dbReference>
<dbReference type="CDD" id="cd19064">
    <property type="entry name" value="LGIC_TM_nAChR"/>
    <property type="match status" value="1"/>
</dbReference>
<dbReference type="FunFam" id="1.20.58.390:FF:000014">
    <property type="entry name" value="Neuronal nicotinic acetylcholine receptor alpha4 subunit"/>
    <property type="match status" value="1"/>
</dbReference>
<dbReference type="FunFam" id="2.70.170.10:FF:000005">
    <property type="entry name" value="Neuronal nicotinic acetylcholine receptor alpha4 subunit"/>
    <property type="match status" value="1"/>
</dbReference>
<dbReference type="FunFam" id="1.20.58.390:FF:000001">
    <property type="entry name" value="Neuronal nicotinic acetylcholine receptor subunit 3"/>
    <property type="match status" value="1"/>
</dbReference>
<dbReference type="Gene3D" id="2.70.170.10">
    <property type="entry name" value="Neurotransmitter-gated ion-channel ligand-binding domain"/>
    <property type="match status" value="1"/>
</dbReference>
<dbReference type="Gene3D" id="1.20.58.390">
    <property type="entry name" value="Neurotransmitter-gated ion-channel transmembrane domain"/>
    <property type="match status" value="2"/>
</dbReference>
<dbReference type="InterPro" id="IPR006202">
    <property type="entry name" value="Neur_chan_lig-bd"/>
</dbReference>
<dbReference type="InterPro" id="IPR036734">
    <property type="entry name" value="Neur_chan_lig-bd_sf"/>
</dbReference>
<dbReference type="InterPro" id="IPR006201">
    <property type="entry name" value="Neur_channel"/>
</dbReference>
<dbReference type="InterPro" id="IPR036719">
    <property type="entry name" value="Neuro-gated_channel_TM_sf"/>
</dbReference>
<dbReference type="InterPro" id="IPR038050">
    <property type="entry name" value="Neuro_actylchol_rec"/>
</dbReference>
<dbReference type="InterPro" id="IPR006029">
    <property type="entry name" value="Neurotrans-gated_channel_TM"/>
</dbReference>
<dbReference type="InterPro" id="IPR018000">
    <property type="entry name" value="Neurotransmitter_ion_chnl_CS"/>
</dbReference>
<dbReference type="InterPro" id="IPR002394">
    <property type="entry name" value="Nicotinic_acetylcholine_rcpt"/>
</dbReference>
<dbReference type="NCBIfam" id="TIGR00860">
    <property type="entry name" value="LIC"/>
    <property type="match status" value="1"/>
</dbReference>
<dbReference type="PANTHER" id="PTHR18945">
    <property type="entry name" value="NEUROTRANSMITTER GATED ION CHANNEL"/>
    <property type="match status" value="1"/>
</dbReference>
<dbReference type="Pfam" id="PF02931">
    <property type="entry name" value="Neur_chan_LBD"/>
    <property type="match status" value="1"/>
</dbReference>
<dbReference type="Pfam" id="PF02932">
    <property type="entry name" value="Neur_chan_memb"/>
    <property type="match status" value="1"/>
</dbReference>
<dbReference type="PRINTS" id="PR00254">
    <property type="entry name" value="NICOTINICR"/>
</dbReference>
<dbReference type="PRINTS" id="PR00252">
    <property type="entry name" value="NRIONCHANNEL"/>
</dbReference>
<dbReference type="SUPFAM" id="SSF90112">
    <property type="entry name" value="Neurotransmitter-gated ion-channel transmembrane pore"/>
    <property type="match status" value="1"/>
</dbReference>
<dbReference type="SUPFAM" id="SSF63712">
    <property type="entry name" value="Nicotinic receptor ligand binding domain-like"/>
    <property type="match status" value="1"/>
</dbReference>
<dbReference type="PROSITE" id="PS00236">
    <property type="entry name" value="NEUROTR_ION_CHANNEL"/>
    <property type="match status" value="1"/>
</dbReference>
<name>ACHA4_MUSPF</name>
<proteinExistence type="evidence at transcript level"/>
<comment type="function">
    <text evidence="1 5">Component of neuronal acetylcholine receptors (nAChRs) that function as pentameric, ligand-gated cation channels with high calcium permeability among other activities. nAChRs are excitatory neurotrasnmitter receptors formed by a collection of nAChR subunits known to mediate synaptic transmission in the nervous system and the neuromuscular junction. Each nAchR subunit confers differential attributes to channel properties, including activation, deactivation and desensitization kinetics, pH sensitivity, cation permeability, and binding to allosteric modulators. CHRNA4 forms heteropentameric neuronal acetylcholine receptors with CHRNB2 and CHRNB4, as well as CHRNA5 and CHRNB3 as accesory subunits. Is the most abundant nAChR subtype expressed in the central nervous system (By similarity). Found in two major stoichiometric forms,(CHRNA4)3:(CHRNB2)2 and (CHRNA4)2:(CHRNB2)3, the two stoichiometric forms differ in their unitary conductance, calcium permeability, ACh sensitivity and potentiation by divalent cation (By similarity). Involved in the modulation of calcium-dependent signaling pathways, influences the release of neurotransmitters, including dopamine, glutamate and GABA (By similarity).</text>
</comment>
<comment type="catalytic activity">
    <reaction evidence="5">
        <text>Ca(2+)(in) = Ca(2+)(out)</text>
        <dbReference type="Rhea" id="RHEA:29671"/>
        <dbReference type="ChEBI" id="CHEBI:29108"/>
    </reaction>
</comment>
<comment type="catalytic activity">
    <reaction evidence="2">
        <text>K(+)(in) = K(+)(out)</text>
        <dbReference type="Rhea" id="RHEA:29463"/>
        <dbReference type="ChEBI" id="CHEBI:29103"/>
    </reaction>
</comment>
<comment type="catalytic activity">
    <reaction evidence="5">
        <text>Na(+)(in) = Na(+)(out)</text>
        <dbReference type="Rhea" id="RHEA:34963"/>
        <dbReference type="ChEBI" id="CHEBI:29101"/>
    </reaction>
</comment>
<comment type="activity regulation">
    <text evidence="4 5">Activated by a myriad of ligands such as acetylcholine, cytisine, nicotine, choline and epibatidine. Channel potentiation by calcium is stoichiometry-selective, CHRNA4:CHRNB2 nACh receptor is achieved by calcium association with topographically distinct sites framed by anionic residues within the CHRNA4 subunit and between the CHRNA4 and CHRNB2 subunits (By similarity). nAChR activity is inhibited by the antagonist alpha-conotoxins BuIA, PnIA, GID and MII, small disulfide-constrained peptides from cone snails (By similarity).</text>
</comment>
<comment type="subunit">
    <text evidence="1 4 5">Neuronal AChR is composed of two different types of subunits: alpha and beta. CHRNA4 forms heteropentameric neuronal acetylcholine receptors with CHRNB2 and CHRNB4, as well as CHRNA5 and CHRNB3 as accesory subunits (By similarity). Found in two major stoichiometric forms, LS (low agonist sensitivity): (CHRNA4)3:(CHRNB2)2 and HS (high agonist sensitivity): (CHRNA4)2:(CHRNB2)3, the two stoichiometric forms differ in their unitary conductance, calcium permeability, ACh sensitivity and potentiation by divalent cation. Cells produce predominantly an (CHRNA4)3:(CHRNB2)2 nAChR. The (CHRNA4)2:(CHRNB2)3 expression is selectively up-regulated by nicotine and has lower single channel conductance and calcium permeability (By similarity). In the striatum, also forms CHRNA4:CHRNA6:CHRNB2 complexes (By similarity). Also found in the stoichiometric form: (CHRNA4:CHRNB2)2:CHRNB3 (By similarity). Interacts with RIC3; which is required for proper folding and assembly. Interacts with LYPD6 (By similarity).</text>
</comment>
<comment type="subcellular location">
    <subcellularLocation>
        <location evidence="1">Synaptic cell membrane</location>
        <topology evidence="6">Multi-pass membrane protein</topology>
    </subcellularLocation>
    <subcellularLocation>
        <location evidence="1">Cell membrane</location>
        <topology evidence="6">Multi-pass membrane protein</topology>
    </subcellularLocation>
</comment>
<comment type="similarity">
    <text evidence="8">Belongs to the ligand-gated ion channel (TC 1.A.9) family. Acetylcholine receptor (TC 1.A.9.1) subfamily. Alpha-4/CHRNA4 sub-subfamily.</text>
</comment>
<evidence type="ECO:0000250" key="1">
    <source>
        <dbReference type="UniProtKB" id="O70174"/>
    </source>
</evidence>
<evidence type="ECO:0000250" key="2">
    <source>
        <dbReference type="UniProtKB" id="P02709"/>
    </source>
</evidence>
<evidence type="ECO:0000250" key="3">
    <source>
        <dbReference type="UniProtKB" id="P04757"/>
    </source>
</evidence>
<evidence type="ECO:0000250" key="4">
    <source>
        <dbReference type="UniProtKB" id="P09483"/>
    </source>
</evidence>
<evidence type="ECO:0000250" key="5">
    <source>
        <dbReference type="UniProtKB" id="P43681"/>
    </source>
</evidence>
<evidence type="ECO:0000255" key="6"/>
<evidence type="ECO:0000256" key="7">
    <source>
        <dbReference type="SAM" id="MobiDB-lite"/>
    </source>
</evidence>
<evidence type="ECO:0000305" key="8"/>
<organism>
    <name type="scientific">Mustela putorius furo</name>
    <name type="common">European domestic ferret</name>
    <name type="synonym">Mustela furo</name>
    <dbReference type="NCBI Taxonomy" id="9669"/>
    <lineage>
        <taxon>Eukaryota</taxon>
        <taxon>Metazoa</taxon>
        <taxon>Chordata</taxon>
        <taxon>Craniata</taxon>
        <taxon>Vertebrata</taxon>
        <taxon>Euteleostomi</taxon>
        <taxon>Mammalia</taxon>
        <taxon>Eutheria</taxon>
        <taxon>Laurasiatheria</taxon>
        <taxon>Carnivora</taxon>
        <taxon>Caniformia</taxon>
        <taxon>Musteloidea</taxon>
        <taxon>Mustelidae</taxon>
        <taxon>Mustelinae</taxon>
        <taxon>Mustela</taxon>
    </lineage>
</organism>
<accession>Q19AE6</accession>
<reference key="1">
    <citation type="journal article" date="2006" name="Mol. Pharmacol.">
        <title>Untranslated region-dependent exclusive expression of high-sensitivity subforms of alpha4beta2 and alpha3beta2 nicotinic acetylcholine receptors.</title>
        <authorList>
            <person name="Briggs C.A."/>
            <person name="Gubbins E.J."/>
            <person name="Marks M.J."/>
            <person name="Putman C.B."/>
            <person name="Thimmapaya R."/>
            <person name="Meyer M.D."/>
            <person name="Surowy C.S."/>
        </authorList>
    </citation>
    <scope>NUCLEOTIDE SEQUENCE [MRNA]</scope>
</reference>
<sequence length="627" mass="69381">MELGGPGAPPPPLLPPLLLLLGAGFLPASSPVETRAHAEERLLKTLFSGYNKWSRPVANISDVVLVHFGLSIAQLIDVDEKNQMMTTNVWVKQEWYDYKLRWDPADYENVTSIRIPSELIWRPDIVLYNNADGDFAITHLTKAHLFHDGRVQWTPPAIYKSSCSIDVTFFPFDQQNCTMKFGSWTYDKAKIDLVSMQSHVDQLGLWESGEWVIVDAAGTYNTRKYECCAEVYPDITYAFVIRRLPLFYTINLIVPCLLISCLTVLVFYLPSDCGEKVTLCISVLLSLTVFLLLITEIIPSTSLVIPLIGEYLLFTMVFVTLSIVITVFVLNVHHRSPRTHTMPAWVRRVFLDVVPRLLLMKRPSVVKDNCRRLIESMHKVASAPGFWPEPEGEPGVVSGERSRGPSRSASFRGPRDEPAEPQPACASPSDRVPAPQPSEGDPGSPCPLPDSCRPPPSTRAPGLTEARSLSFQHVSSAAERVEGGVRCRSWSIQGCAPQDEAASVAGGPVTSSPAFPKASAAELLPPDQPSPCRCRCRKEPSPNAVRKACGTRVPARHLPLSPALARAVEGVQYIADHLKAEDTDFSVKEDWKYVAMVIDRIFLWVFVIVCLLGTAGLFLPPWLAGMI</sequence>